<protein>
    <recommendedName>
        <fullName evidence="1">2-dehydro-3-deoxyphosphooctonate aldolase</fullName>
        <ecNumber evidence="1">2.5.1.55</ecNumber>
    </recommendedName>
    <alternativeName>
        <fullName evidence="1">3-deoxy-D-manno-octulosonic acid 8-phosphate synthase</fullName>
    </alternativeName>
    <alternativeName>
        <fullName evidence="1">KDO-8-phosphate synthase</fullName>
        <shortName evidence="1">KDO 8-P synthase</shortName>
        <shortName evidence="1">KDOPS</shortName>
    </alternativeName>
    <alternativeName>
        <fullName evidence="1">Phospho-2-dehydro-3-deoxyoctonate aldolase</fullName>
    </alternativeName>
</protein>
<dbReference type="EC" id="2.5.1.55" evidence="1"/>
<dbReference type="EMBL" id="CP000891">
    <property type="protein sequence ID" value="ABX50891.1"/>
    <property type="molecule type" value="Genomic_DNA"/>
</dbReference>
<dbReference type="RefSeq" id="WP_006080266.1">
    <property type="nucleotide sequence ID" value="NC_009997.1"/>
</dbReference>
<dbReference type="SMR" id="A9L2C8"/>
<dbReference type="GeneID" id="11773752"/>
<dbReference type="KEGG" id="sbn:Sbal195_3731"/>
<dbReference type="HOGENOM" id="CLU_036666_0_0_6"/>
<dbReference type="UniPathway" id="UPA00030"/>
<dbReference type="UniPathway" id="UPA00357">
    <property type="reaction ID" value="UER00474"/>
</dbReference>
<dbReference type="Proteomes" id="UP000000770">
    <property type="component" value="Chromosome"/>
</dbReference>
<dbReference type="GO" id="GO:0005737">
    <property type="term" value="C:cytoplasm"/>
    <property type="evidence" value="ECO:0007669"/>
    <property type="project" value="UniProtKB-SubCell"/>
</dbReference>
<dbReference type="GO" id="GO:0008676">
    <property type="term" value="F:3-deoxy-8-phosphooctulonate synthase activity"/>
    <property type="evidence" value="ECO:0007669"/>
    <property type="project" value="UniProtKB-UniRule"/>
</dbReference>
<dbReference type="GO" id="GO:0019294">
    <property type="term" value="P:keto-3-deoxy-D-manno-octulosonic acid biosynthetic process"/>
    <property type="evidence" value="ECO:0007669"/>
    <property type="project" value="UniProtKB-UniRule"/>
</dbReference>
<dbReference type="Gene3D" id="3.20.20.70">
    <property type="entry name" value="Aldolase class I"/>
    <property type="match status" value="1"/>
</dbReference>
<dbReference type="HAMAP" id="MF_00056">
    <property type="entry name" value="KDO8P_synth"/>
    <property type="match status" value="1"/>
</dbReference>
<dbReference type="InterPro" id="IPR013785">
    <property type="entry name" value="Aldolase_TIM"/>
</dbReference>
<dbReference type="InterPro" id="IPR006218">
    <property type="entry name" value="DAHP1/KDSA"/>
</dbReference>
<dbReference type="InterPro" id="IPR006269">
    <property type="entry name" value="KDO8P_synthase"/>
</dbReference>
<dbReference type="NCBIfam" id="TIGR01362">
    <property type="entry name" value="KDO8P_synth"/>
    <property type="match status" value="1"/>
</dbReference>
<dbReference type="NCBIfam" id="NF003543">
    <property type="entry name" value="PRK05198.1"/>
    <property type="match status" value="1"/>
</dbReference>
<dbReference type="NCBIfam" id="NF009109">
    <property type="entry name" value="PRK12457.1"/>
    <property type="match status" value="1"/>
</dbReference>
<dbReference type="PANTHER" id="PTHR21057">
    <property type="entry name" value="PHOSPHO-2-DEHYDRO-3-DEOXYHEPTONATE ALDOLASE"/>
    <property type="match status" value="1"/>
</dbReference>
<dbReference type="Pfam" id="PF00793">
    <property type="entry name" value="DAHP_synth_1"/>
    <property type="match status" value="1"/>
</dbReference>
<dbReference type="SUPFAM" id="SSF51569">
    <property type="entry name" value="Aldolase"/>
    <property type="match status" value="1"/>
</dbReference>
<comment type="catalytic activity">
    <reaction evidence="1">
        <text>D-arabinose 5-phosphate + phosphoenolpyruvate + H2O = 3-deoxy-alpha-D-manno-2-octulosonate-8-phosphate + phosphate</text>
        <dbReference type="Rhea" id="RHEA:14053"/>
        <dbReference type="ChEBI" id="CHEBI:15377"/>
        <dbReference type="ChEBI" id="CHEBI:43474"/>
        <dbReference type="ChEBI" id="CHEBI:57693"/>
        <dbReference type="ChEBI" id="CHEBI:58702"/>
        <dbReference type="ChEBI" id="CHEBI:85985"/>
        <dbReference type="EC" id="2.5.1.55"/>
    </reaction>
</comment>
<comment type="pathway">
    <text evidence="1">Carbohydrate biosynthesis; 3-deoxy-D-manno-octulosonate biosynthesis; 3-deoxy-D-manno-octulosonate from D-ribulose 5-phosphate: step 2/3.</text>
</comment>
<comment type="pathway">
    <text evidence="1">Bacterial outer membrane biogenesis; lipopolysaccharide biosynthesis.</text>
</comment>
<comment type="subcellular location">
    <subcellularLocation>
        <location evidence="1">Cytoplasm</location>
    </subcellularLocation>
</comment>
<comment type="similarity">
    <text evidence="1">Belongs to the KdsA family.</text>
</comment>
<reference key="1">
    <citation type="submission" date="2007-11" db="EMBL/GenBank/DDBJ databases">
        <title>Complete sequence of chromosome of Shewanella baltica OS195.</title>
        <authorList>
            <consortium name="US DOE Joint Genome Institute"/>
            <person name="Copeland A."/>
            <person name="Lucas S."/>
            <person name="Lapidus A."/>
            <person name="Barry K."/>
            <person name="Glavina del Rio T."/>
            <person name="Dalin E."/>
            <person name="Tice H."/>
            <person name="Pitluck S."/>
            <person name="Chain P."/>
            <person name="Malfatti S."/>
            <person name="Shin M."/>
            <person name="Vergez L."/>
            <person name="Schmutz J."/>
            <person name="Larimer F."/>
            <person name="Land M."/>
            <person name="Hauser L."/>
            <person name="Kyrpides N."/>
            <person name="Kim E."/>
            <person name="Brettar I."/>
            <person name="Rodrigues J."/>
            <person name="Konstantinidis K."/>
            <person name="Klappenbach J."/>
            <person name="Hofle M."/>
            <person name="Tiedje J."/>
            <person name="Richardson P."/>
        </authorList>
    </citation>
    <scope>NUCLEOTIDE SEQUENCE [LARGE SCALE GENOMIC DNA]</scope>
    <source>
        <strain>OS195</strain>
    </source>
</reference>
<gene>
    <name evidence="1" type="primary">kdsA</name>
    <name type="ordered locus">Sbal195_3731</name>
</gene>
<keyword id="KW-0963">Cytoplasm</keyword>
<keyword id="KW-0448">Lipopolysaccharide biosynthesis</keyword>
<keyword id="KW-0808">Transferase</keyword>
<feature type="chain" id="PRO_1000074989" description="2-dehydro-3-deoxyphosphooctonate aldolase">
    <location>
        <begin position="1"/>
        <end position="282"/>
    </location>
</feature>
<organism>
    <name type="scientific">Shewanella baltica (strain OS195)</name>
    <dbReference type="NCBI Taxonomy" id="399599"/>
    <lineage>
        <taxon>Bacteria</taxon>
        <taxon>Pseudomonadati</taxon>
        <taxon>Pseudomonadota</taxon>
        <taxon>Gammaproteobacteria</taxon>
        <taxon>Alteromonadales</taxon>
        <taxon>Shewanellaceae</taxon>
        <taxon>Shewanella</taxon>
    </lineage>
</organism>
<proteinExistence type="inferred from homology"/>
<sequence length="282" mass="30907">MSNKIINLGSIEIANDKPFVLFGGMNVLESRDLAMSIAETYAEVTQKLGIPYVFKASFDKANRSSINSYRGPGMEEGLKIFEEIKKTFNLPLITDVHEVHQCAPVAEVVDIIQLPAFLARQTDLVVAMAKTGAIINVKKPQFLAPHEMRHIITKFNEAGNDEIILCERGSSFGYNNLVVDMLGMDEMKQSGYPVIFDATHALQRPGGRADSAGGRRAQATELARSGMALGLAGLFIEAHPDPDNAKCDGPCALPLHQLENYLKQMKAIDDLVKSFEPIDTSK</sequence>
<name>KDSA_SHEB9</name>
<accession>A9L2C8</accession>
<evidence type="ECO:0000255" key="1">
    <source>
        <dbReference type="HAMAP-Rule" id="MF_00056"/>
    </source>
</evidence>